<keyword id="KW-1185">Reference proteome</keyword>
<organism>
    <name type="scientific">Mycobacterium tuberculosis (strain ATCC 25618 / H37Rv)</name>
    <dbReference type="NCBI Taxonomy" id="83332"/>
    <lineage>
        <taxon>Bacteria</taxon>
        <taxon>Bacillati</taxon>
        <taxon>Actinomycetota</taxon>
        <taxon>Actinomycetes</taxon>
        <taxon>Mycobacteriales</taxon>
        <taxon>Mycobacteriaceae</taxon>
        <taxon>Mycobacterium</taxon>
        <taxon>Mycobacterium tuberculosis complex</taxon>
    </lineage>
</organism>
<feature type="chain" id="PRO_0000103868" description="Uncharacterized protein Rv1520">
    <location>
        <begin position="1"/>
        <end position="346"/>
    </location>
</feature>
<feature type="region of interest" description="Disordered" evidence="1">
    <location>
        <begin position="322"/>
        <end position="346"/>
    </location>
</feature>
<evidence type="ECO:0000256" key="1">
    <source>
        <dbReference type="SAM" id="MobiDB-lite"/>
    </source>
</evidence>
<gene>
    <name type="ordered locus">Rv1520</name>
    <name type="ORF">MTCY19G5.08c</name>
</gene>
<reference key="1">
    <citation type="journal article" date="1998" name="Nature">
        <title>Deciphering the biology of Mycobacterium tuberculosis from the complete genome sequence.</title>
        <authorList>
            <person name="Cole S.T."/>
            <person name="Brosch R."/>
            <person name="Parkhill J."/>
            <person name="Garnier T."/>
            <person name="Churcher C.M."/>
            <person name="Harris D.E."/>
            <person name="Gordon S.V."/>
            <person name="Eiglmeier K."/>
            <person name="Gas S."/>
            <person name="Barry C.E. III"/>
            <person name="Tekaia F."/>
            <person name="Badcock K."/>
            <person name="Basham D."/>
            <person name="Brown D."/>
            <person name="Chillingworth T."/>
            <person name="Connor R."/>
            <person name="Davies R.M."/>
            <person name="Devlin K."/>
            <person name="Feltwell T."/>
            <person name="Gentles S."/>
            <person name="Hamlin N."/>
            <person name="Holroyd S."/>
            <person name="Hornsby T."/>
            <person name="Jagels K."/>
            <person name="Krogh A."/>
            <person name="McLean J."/>
            <person name="Moule S."/>
            <person name="Murphy L.D."/>
            <person name="Oliver S."/>
            <person name="Osborne J."/>
            <person name="Quail M.A."/>
            <person name="Rajandream M.A."/>
            <person name="Rogers J."/>
            <person name="Rutter S."/>
            <person name="Seeger K."/>
            <person name="Skelton S."/>
            <person name="Squares S."/>
            <person name="Squares R."/>
            <person name="Sulston J.E."/>
            <person name="Taylor K."/>
            <person name="Whitehead S."/>
            <person name="Barrell B.G."/>
        </authorList>
    </citation>
    <scope>NUCLEOTIDE SEQUENCE [LARGE SCALE GENOMIC DNA]</scope>
    <source>
        <strain>ATCC 25618 / H37Rv</strain>
    </source>
</reference>
<reference key="2">
    <citation type="journal article" date="2011" name="Mol. Cell. Proteomics">
        <title>Proteogenomic analysis of Mycobacterium tuberculosis by high resolution mass spectrometry.</title>
        <authorList>
            <person name="Kelkar D.S."/>
            <person name="Kumar D."/>
            <person name="Kumar P."/>
            <person name="Balakrishnan L."/>
            <person name="Muthusamy B."/>
            <person name="Yadav A.K."/>
            <person name="Shrivastava P."/>
            <person name="Marimuthu A."/>
            <person name="Anand S."/>
            <person name="Sundaram H."/>
            <person name="Kingsbury R."/>
            <person name="Harsha H.C."/>
            <person name="Nair B."/>
            <person name="Prasad T.S."/>
            <person name="Chauhan D.S."/>
            <person name="Katoch K."/>
            <person name="Katoch V.M."/>
            <person name="Kumar P."/>
            <person name="Chaerkady R."/>
            <person name="Ramachandran S."/>
            <person name="Dash D."/>
            <person name="Pandey A."/>
        </authorList>
    </citation>
    <scope>IDENTIFICATION BY MASS SPECTROMETRY [LARGE SCALE ANALYSIS]</scope>
    <source>
        <strain>ATCC 25618 / H37Rv</strain>
    </source>
</reference>
<name>Y1520_MYCTU</name>
<sequence>MSIVSISYNQEEYIREALDGFAAQRTEFPVEVIIADDASTDATPRIIGEYAARYPQLFRPILRQTNIGVHANFKDVLSAARGEYLALCEGDDYWTDPLKLSKQVKYLDRHPETTVCFHPVRVIYEDGAKDSEFPPLSWRRDLSVDALLARNFIQTNSVVYRRQPSYDDIPANVMPIDWYLHVRHAVGGEIAMLPETMAVYRRHAHGIWHSAYTDRRKFWETRGHGMAATLEAMLDLVHGHREREAIVGEVSAWVLREIGKTPGRQGRALLLKSIADHPRMTMLSLQHRWAQTPWRRFKRRLSTELSSLAALAYATRRRALEGRDGGYRETTSPPTGRGRNVRGSHA</sequence>
<proteinExistence type="evidence at protein level"/>
<dbReference type="EMBL" id="AL123456">
    <property type="protein sequence ID" value="CCP44284.1"/>
    <property type="molecule type" value="Genomic_DNA"/>
</dbReference>
<dbReference type="PIR" id="H70722">
    <property type="entry name" value="H70722"/>
</dbReference>
<dbReference type="RefSeq" id="NP_216036.3">
    <property type="nucleotide sequence ID" value="NC_000962.3"/>
</dbReference>
<dbReference type="RefSeq" id="WP_003407657.1">
    <property type="nucleotide sequence ID" value="NZ_NVQJ01000004.1"/>
</dbReference>
<dbReference type="SMR" id="P9WLV5"/>
<dbReference type="STRING" id="83332.Rv1520"/>
<dbReference type="PaxDb" id="83332-Rv1520"/>
<dbReference type="DNASU" id="886447"/>
<dbReference type="GeneID" id="886447"/>
<dbReference type="KEGG" id="mtu:Rv1520"/>
<dbReference type="KEGG" id="mtv:RVBD_1520"/>
<dbReference type="TubercuList" id="Rv1520"/>
<dbReference type="eggNOG" id="COG0463">
    <property type="taxonomic scope" value="Bacteria"/>
</dbReference>
<dbReference type="InParanoid" id="P9WLV5"/>
<dbReference type="OrthoDB" id="9798249at2"/>
<dbReference type="PhylomeDB" id="P9WLV5"/>
<dbReference type="Proteomes" id="UP000001584">
    <property type="component" value="Chromosome"/>
</dbReference>
<dbReference type="GO" id="GO:0009274">
    <property type="term" value="C:peptidoglycan-based cell wall"/>
    <property type="evidence" value="ECO:0007005"/>
    <property type="project" value="MTBBASE"/>
</dbReference>
<dbReference type="GO" id="GO:0005886">
    <property type="term" value="C:plasma membrane"/>
    <property type="evidence" value="ECO:0007005"/>
    <property type="project" value="MTBBASE"/>
</dbReference>
<dbReference type="GO" id="GO:0016757">
    <property type="term" value="F:glycosyltransferase activity"/>
    <property type="evidence" value="ECO:0000318"/>
    <property type="project" value="GO_Central"/>
</dbReference>
<dbReference type="GO" id="GO:0016758">
    <property type="term" value="F:hexosyltransferase activity"/>
    <property type="evidence" value="ECO:0007669"/>
    <property type="project" value="UniProtKB-ARBA"/>
</dbReference>
<dbReference type="GO" id="GO:0009058">
    <property type="term" value="P:biosynthetic process"/>
    <property type="evidence" value="ECO:0007669"/>
    <property type="project" value="UniProtKB-ARBA"/>
</dbReference>
<dbReference type="FunFam" id="3.90.550.10:FF:000166">
    <property type="entry name" value="Probable sugar transferase"/>
    <property type="match status" value="1"/>
</dbReference>
<dbReference type="Gene3D" id="3.90.550.10">
    <property type="entry name" value="Spore Coat Polysaccharide Biosynthesis Protein SpsA, Chain A"/>
    <property type="match status" value="1"/>
</dbReference>
<dbReference type="InterPro" id="IPR001173">
    <property type="entry name" value="Glyco_trans_2-like"/>
</dbReference>
<dbReference type="InterPro" id="IPR029044">
    <property type="entry name" value="Nucleotide-diphossugar_trans"/>
</dbReference>
<dbReference type="PANTHER" id="PTHR22916">
    <property type="entry name" value="GLYCOSYLTRANSFERASE"/>
    <property type="match status" value="1"/>
</dbReference>
<dbReference type="PANTHER" id="PTHR22916:SF3">
    <property type="entry name" value="UDP-GLCNAC:BETAGAL BETA-1,3-N-ACETYLGLUCOSAMINYLTRANSFERASE-LIKE PROTEIN 1"/>
    <property type="match status" value="1"/>
</dbReference>
<dbReference type="Pfam" id="PF00535">
    <property type="entry name" value="Glycos_transf_2"/>
    <property type="match status" value="1"/>
</dbReference>
<dbReference type="SUPFAM" id="SSF53448">
    <property type="entry name" value="Nucleotide-diphospho-sugar transferases"/>
    <property type="match status" value="1"/>
</dbReference>
<accession>P9WLV5</accession>
<accession>L0T9N7</accession>
<accession>P64863</accession>
<accession>Q50587</accession>
<protein>
    <recommendedName>
        <fullName>Uncharacterized protein Rv1520</fullName>
    </recommendedName>
</protein>